<dbReference type="EC" id="6.3.2.8" evidence="1"/>
<dbReference type="EMBL" id="CP000468">
    <property type="protein sequence ID" value="ABI99575.1"/>
    <property type="molecule type" value="Genomic_DNA"/>
</dbReference>
<dbReference type="RefSeq" id="WP_001096045.1">
    <property type="nucleotide sequence ID" value="NC_008563.1"/>
</dbReference>
<dbReference type="SMR" id="A1A7D6"/>
<dbReference type="KEGG" id="ecv:APECO1_1895"/>
<dbReference type="HOGENOM" id="CLU_028104_2_2_6"/>
<dbReference type="UniPathway" id="UPA00219"/>
<dbReference type="Proteomes" id="UP000008216">
    <property type="component" value="Chromosome"/>
</dbReference>
<dbReference type="GO" id="GO:0005737">
    <property type="term" value="C:cytoplasm"/>
    <property type="evidence" value="ECO:0007669"/>
    <property type="project" value="UniProtKB-SubCell"/>
</dbReference>
<dbReference type="GO" id="GO:0005524">
    <property type="term" value="F:ATP binding"/>
    <property type="evidence" value="ECO:0007669"/>
    <property type="project" value="UniProtKB-UniRule"/>
</dbReference>
<dbReference type="GO" id="GO:0008763">
    <property type="term" value="F:UDP-N-acetylmuramate-L-alanine ligase activity"/>
    <property type="evidence" value="ECO:0007669"/>
    <property type="project" value="UniProtKB-UniRule"/>
</dbReference>
<dbReference type="GO" id="GO:0051301">
    <property type="term" value="P:cell division"/>
    <property type="evidence" value="ECO:0007669"/>
    <property type="project" value="UniProtKB-KW"/>
</dbReference>
<dbReference type="GO" id="GO:0071555">
    <property type="term" value="P:cell wall organization"/>
    <property type="evidence" value="ECO:0007669"/>
    <property type="project" value="UniProtKB-KW"/>
</dbReference>
<dbReference type="GO" id="GO:0009252">
    <property type="term" value="P:peptidoglycan biosynthetic process"/>
    <property type="evidence" value="ECO:0007669"/>
    <property type="project" value="UniProtKB-UniRule"/>
</dbReference>
<dbReference type="GO" id="GO:0008360">
    <property type="term" value="P:regulation of cell shape"/>
    <property type="evidence" value="ECO:0007669"/>
    <property type="project" value="UniProtKB-KW"/>
</dbReference>
<dbReference type="FunFam" id="3.40.1190.10:FF:000001">
    <property type="entry name" value="UDP-N-acetylmuramate--L-alanine ligase"/>
    <property type="match status" value="1"/>
</dbReference>
<dbReference type="FunFam" id="3.40.50.720:FF:000046">
    <property type="entry name" value="UDP-N-acetylmuramate--L-alanine ligase"/>
    <property type="match status" value="1"/>
</dbReference>
<dbReference type="FunFam" id="3.90.190.20:FF:000001">
    <property type="entry name" value="UDP-N-acetylmuramate--L-alanine ligase"/>
    <property type="match status" value="1"/>
</dbReference>
<dbReference type="Gene3D" id="3.90.190.20">
    <property type="entry name" value="Mur ligase, C-terminal domain"/>
    <property type="match status" value="1"/>
</dbReference>
<dbReference type="Gene3D" id="3.40.1190.10">
    <property type="entry name" value="Mur-like, catalytic domain"/>
    <property type="match status" value="1"/>
</dbReference>
<dbReference type="Gene3D" id="3.40.50.720">
    <property type="entry name" value="NAD(P)-binding Rossmann-like Domain"/>
    <property type="match status" value="1"/>
</dbReference>
<dbReference type="HAMAP" id="MF_00046">
    <property type="entry name" value="MurC"/>
    <property type="match status" value="1"/>
</dbReference>
<dbReference type="InterPro" id="IPR036565">
    <property type="entry name" value="Mur-like_cat_sf"/>
</dbReference>
<dbReference type="InterPro" id="IPR004101">
    <property type="entry name" value="Mur_ligase_C"/>
</dbReference>
<dbReference type="InterPro" id="IPR036615">
    <property type="entry name" value="Mur_ligase_C_dom_sf"/>
</dbReference>
<dbReference type="InterPro" id="IPR013221">
    <property type="entry name" value="Mur_ligase_cen"/>
</dbReference>
<dbReference type="InterPro" id="IPR000713">
    <property type="entry name" value="Mur_ligase_N"/>
</dbReference>
<dbReference type="InterPro" id="IPR050061">
    <property type="entry name" value="MurCDEF_pg_biosynth"/>
</dbReference>
<dbReference type="InterPro" id="IPR005758">
    <property type="entry name" value="UDP-N-AcMur_Ala_ligase_MurC"/>
</dbReference>
<dbReference type="NCBIfam" id="TIGR01082">
    <property type="entry name" value="murC"/>
    <property type="match status" value="1"/>
</dbReference>
<dbReference type="PANTHER" id="PTHR43445:SF3">
    <property type="entry name" value="UDP-N-ACETYLMURAMATE--L-ALANINE LIGASE"/>
    <property type="match status" value="1"/>
</dbReference>
<dbReference type="PANTHER" id="PTHR43445">
    <property type="entry name" value="UDP-N-ACETYLMURAMATE--L-ALANINE LIGASE-RELATED"/>
    <property type="match status" value="1"/>
</dbReference>
<dbReference type="Pfam" id="PF01225">
    <property type="entry name" value="Mur_ligase"/>
    <property type="match status" value="1"/>
</dbReference>
<dbReference type="Pfam" id="PF02875">
    <property type="entry name" value="Mur_ligase_C"/>
    <property type="match status" value="1"/>
</dbReference>
<dbReference type="Pfam" id="PF08245">
    <property type="entry name" value="Mur_ligase_M"/>
    <property type="match status" value="1"/>
</dbReference>
<dbReference type="SUPFAM" id="SSF51984">
    <property type="entry name" value="MurCD N-terminal domain"/>
    <property type="match status" value="1"/>
</dbReference>
<dbReference type="SUPFAM" id="SSF53623">
    <property type="entry name" value="MurD-like peptide ligases, catalytic domain"/>
    <property type="match status" value="1"/>
</dbReference>
<dbReference type="SUPFAM" id="SSF53244">
    <property type="entry name" value="MurD-like peptide ligases, peptide-binding domain"/>
    <property type="match status" value="1"/>
</dbReference>
<name>MURC_ECOK1</name>
<proteinExistence type="inferred from homology"/>
<protein>
    <recommendedName>
        <fullName evidence="1">UDP-N-acetylmuramate--L-alanine ligase</fullName>
        <ecNumber evidence="1">6.3.2.8</ecNumber>
    </recommendedName>
    <alternativeName>
        <fullName evidence="1">UDP-N-acetylmuramoyl-L-alanine synthetase</fullName>
    </alternativeName>
</protein>
<sequence>MNTQQLAKLRSIVPEMRRVRHIHFVGIGGAGMGGIAEVLANEGYQISGSDLAPNPVTQQLMNLGATIYFNHRPENVRDASVVVVSSAISADNPEIVAAHEARIPVIRRAEMLAELMRFRHGIAIAGTHGKTTTTAMVSSIYAEAGLDPTFVNGGLVKAAGVHARLGHGRYLIAEADESDASFLHLQPMVAIVTNIEADHMDTYQGDFENLKQTFINFLHNLPFYGRAVMCVDDPVIRELLPRVGRQTTTYGFSEDADVRVEDYQQIGPQGHFTLLRQDKEPMRVTLNAPGRHNALNAAAAVAVATEEGIDDEAILRALESFQGTGRRFDFLGEFPLEPVNGKSGTAMLVDDYGHHPTEVDATIKAARAGWPDKKLVMLFQPHRFTRTRDLYDDFANVLTQVDTLLMLEVYPAGEAPIPGADSRSLCRTIRGRGKIDPILVPDPAQVAEMLAPVLTGNDLILVQGAGNIGKIARSLAEIKLKPQTPEEEQHD</sequence>
<feature type="chain" id="PRO_1000004339" description="UDP-N-acetylmuramate--L-alanine ligase">
    <location>
        <begin position="1"/>
        <end position="491"/>
    </location>
</feature>
<feature type="binding site" evidence="1">
    <location>
        <begin position="126"/>
        <end position="132"/>
    </location>
    <ligand>
        <name>ATP</name>
        <dbReference type="ChEBI" id="CHEBI:30616"/>
    </ligand>
</feature>
<evidence type="ECO:0000255" key="1">
    <source>
        <dbReference type="HAMAP-Rule" id="MF_00046"/>
    </source>
</evidence>
<organism>
    <name type="scientific">Escherichia coli O1:K1 / APEC</name>
    <dbReference type="NCBI Taxonomy" id="405955"/>
    <lineage>
        <taxon>Bacteria</taxon>
        <taxon>Pseudomonadati</taxon>
        <taxon>Pseudomonadota</taxon>
        <taxon>Gammaproteobacteria</taxon>
        <taxon>Enterobacterales</taxon>
        <taxon>Enterobacteriaceae</taxon>
        <taxon>Escherichia</taxon>
    </lineage>
</organism>
<comment type="function">
    <text evidence="1">Cell wall formation.</text>
</comment>
<comment type="catalytic activity">
    <reaction evidence="1">
        <text>UDP-N-acetyl-alpha-D-muramate + L-alanine + ATP = UDP-N-acetyl-alpha-D-muramoyl-L-alanine + ADP + phosphate + H(+)</text>
        <dbReference type="Rhea" id="RHEA:23372"/>
        <dbReference type="ChEBI" id="CHEBI:15378"/>
        <dbReference type="ChEBI" id="CHEBI:30616"/>
        <dbReference type="ChEBI" id="CHEBI:43474"/>
        <dbReference type="ChEBI" id="CHEBI:57972"/>
        <dbReference type="ChEBI" id="CHEBI:70757"/>
        <dbReference type="ChEBI" id="CHEBI:83898"/>
        <dbReference type="ChEBI" id="CHEBI:456216"/>
        <dbReference type="EC" id="6.3.2.8"/>
    </reaction>
</comment>
<comment type="pathway">
    <text evidence="1">Cell wall biogenesis; peptidoglycan biosynthesis.</text>
</comment>
<comment type="subcellular location">
    <subcellularLocation>
        <location evidence="1">Cytoplasm</location>
    </subcellularLocation>
</comment>
<comment type="similarity">
    <text evidence="1">Belongs to the MurCDEF family.</text>
</comment>
<accession>A1A7D6</accession>
<gene>
    <name evidence="1" type="primary">murC</name>
    <name type="ordered locus">Ecok1_00820</name>
    <name type="ORF">APECO1_1895</name>
</gene>
<reference key="1">
    <citation type="journal article" date="2007" name="J. Bacteriol.">
        <title>The genome sequence of avian pathogenic Escherichia coli strain O1:K1:H7 shares strong similarities with human extraintestinal pathogenic E. coli genomes.</title>
        <authorList>
            <person name="Johnson T.J."/>
            <person name="Kariyawasam S."/>
            <person name="Wannemuehler Y."/>
            <person name="Mangiamele P."/>
            <person name="Johnson S.J."/>
            <person name="Doetkott C."/>
            <person name="Skyberg J.A."/>
            <person name="Lynne A.M."/>
            <person name="Johnson J.R."/>
            <person name="Nolan L.K."/>
        </authorList>
    </citation>
    <scope>NUCLEOTIDE SEQUENCE [LARGE SCALE GENOMIC DNA]</scope>
</reference>
<keyword id="KW-0067">ATP-binding</keyword>
<keyword id="KW-0131">Cell cycle</keyword>
<keyword id="KW-0132">Cell division</keyword>
<keyword id="KW-0133">Cell shape</keyword>
<keyword id="KW-0961">Cell wall biogenesis/degradation</keyword>
<keyword id="KW-0963">Cytoplasm</keyword>
<keyword id="KW-0436">Ligase</keyword>
<keyword id="KW-0547">Nucleotide-binding</keyword>
<keyword id="KW-0573">Peptidoglycan synthesis</keyword>
<keyword id="KW-1185">Reference proteome</keyword>